<protein>
    <recommendedName>
        <fullName evidence="7">Lysophospholipid acyltransferase LPEAT1</fullName>
        <ecNumber evidence="4 5">2.3.1.23</ecNumber>
        <ecNumber evidence="4">2.3.1.51</ecNumber>
        <ecNumber evidence="4">2.3.1.n6</ecNumber>
        <ecNumber evidence="4 5">2.3.1.n7</ecNumber>
    </recommendedName>
    <alternativeName>
        <fullName evidence="7">Lysophosphatidylethanolamine acyltransferase 1</fullName>
        <shortName evidence="7">AtLPEAT1</shortName>
    </alternativeName>
</protein>
<evidence type="ECO:0000250" key="1">
    <source>
        <dbReference type="UniProtKB" id="Q3TFD2"/>
    </source>
</evidence>
<evidence type="ECO:0000255" key="2"/>
<evidence type="ECO:0000256" key="3">
    <source>
        <dbReference type="SAM" id="MobiDB-lite"/>
    </source>
</evidence>
<evidence type="ECO:0000269" key="4">
    <source>
    </source>
</evidence>
<evidence type="ECO:0000269" key="5">
    <source>
    </source>
</evidence>
<evidence type="ECO:0000269" key="6">
    <source>
    </source>
</evidence>
<evidence type="ECO:0000303" key="7">
    <source>
    </source>
</evidence>
<evidence type="ECO:0000305" key="8"/>
<evidence type="ECO:0000305" key="9">
    <source>
    </source>
</evidence>
<evidence type="ECO:0000312" key="10">
    <source>
        <dbReference type="Araport" id="AT1G80950"/>
    </source>
</evidence>
<evidence type="ECO:0000312" key="11">
    <source>
        <dbReference type="EMBL" id="AAF14683.1"/>
    </source>
</evidence>
<evidence type="ECO:0007744" key="12">
    <source>
    </source>
</evidence>
<proteinExistence type="evidence at protein level"/>
<sequence>MESELKDLNSNSNPPSSKEDRPLLKSESDLAAAIEELDKKFAPYARTDLYGTMGLGPFPMTENIKLAVALVTLVPLRFLLSMSILLLYYLICRVFTLFSAPYRGPEEEEDEGGVVFQEDYAHMEGWKRTVIVRSGRFLSRVLLFVFGFYWIHESCPDRDSDMDSNPKTTSTEINQKGEAATEEPERPGAIVSNHVSYLDILYHMSASFPSFVAKRSVGKLPLVGLISKCLGCVYVQREAKSPDFKGVSGTVNERVREAHSNKSAPTIMLFPEGTTTNGDYLLTFKTGAFLAGTPVLPVILKYPYERFSVAWDTISGARHILFLLCQVVNHLEVIRLPVYYPSQEEKDDPKLYASNVRKLMATEGNLILSELGLSDKRIYHATLNGNLSQTRDFHQKEE</sequence>
<reference key="1">
    <citation type="journal article" date="2000" name="Nature">
        <title>Sequence and analysis of chromosome 1 of the plant Arabidopsis thaliana.</title>
        <authorList>
            <person name="Theologis A."/>
            <person name="Ecker J.R."/>
            <person name="Palm C.J."/>
            <person name="Federspiel N.A."/>
            <person name="Kaul S."/>
            <person name="White O."/>
            <person name="Alonso J."/>
            <person name="Altafi H."/>
            <person name="Araujo R."/>
            <person name="Bowman C.L."/>
            <person name="Brooks S.Y."/>
            <person name="Buehler E."/>
            <person name="Chan A."/>
            <person name="Chao Q."/>
            <person name="Chen H."/>
            <person name="Cheuk R.F."/>
            <person name="Chin C.W."/>
            <person name="Chung M.K."/>
            <person name="Conn L."/>
            <person name="Conway A.B."/>
            <person name="Conway A.R."/>
            <person name="Creasy T.H."/>
            <person name="Dewar K."/>
            <person name="Dunn P."/>
            <person name="Etgu P."/>
            <person name="Feldblyum T.V."/>
            <person name="Feng J.-D."/>
            <person name="Fong B."/>
            <person name="Fujii C.Y."/>
            <person name="Gill J.E."/>
            <person name="Goldsmith A.D."/>
            <person name="Haas B."/>
            <person name="Hansen N.F."/>
            <person name="Hughes B."/>
            <person name="Huizar L."/>
            <person name="Hunter J.L."/>
            <person name="Jenkins J."/>
            <person name="Johnson-Hopson C."/>
            <person name="Khan S."/>
            <person name="Khaykin E."/>
            <person name="Kim C.J."/>
            <person name="Koo H.L."/>
            <person name="Kremenetskaia I."/>
            <person name="Kurtz D.B."/>
            <person name="Kwan A."/>
            <person name="Lam B."/>
            <person name="Langin-Hooper S."/>
            <person name="Lee A."/>
            <person name="Lee J.M."/>
            <person name="Lenz C.A."/>
            <person name="Li J.H."/>
            <person name="Li Y.-P."/>
            <person name="Lin X."/>
            <person name="Liu S.X."/>
            <person name="Liu Z.A."/>
            <person name="Luros J.S."/>
            <person name="Maiti R."/>
            <person name="Marziali A."/>
            <person name="Militscher J."/>
            <person name="Miranda M."/>
            <person name="Nguyen M."/>
            <person name="Nierman W.C."/>
            <person name="Osborne B.I."/>
            <person name="Pai G."/>
            <person name="Peterson J."/>
            <person name="Pham P.K."/>
            <person name="Rizzo M."/>
            <person name="Rooney T."/>
            <person name="Rowley D."/>
            <person name="Sakano H."/>
            <person name="Salzberg S.L."/>
            <person name="Schwartz J.R."/>
            <person name="Shinn P."/>
            <person name="Southwick A.M."/>
            <person name="Sun H."/>
            <person name="Tallon L.J."/>
            <person name="Tambunga G."/>
            <person name="Toriumi M.J."/>
            <person name="Town C.D."/>
            <person name="Utterback T."/>
            <person name="Van Aken S."/>
            <person name="Vaysberg M."/>
            <person name="Vysotskaia V.S."/>
            <person name="Walker M."/>
            <person name="Wu D."/>
            <person name="Yu G."/>
            <person name="Fraser C.M."/>
            <person name="Venter J.C."/>
            <person name="Davis R.W."/>
        </authorList>
    </citation>
    <scope>NUCLEOTIDE SEQUENCE [LARGE SCALE GENOMIC DNA]</scope>
    <source>
        <strain>cv. Columbia</strain>
    </source>
</reference>
<reference key="2">
    <citation type="journal article" date="2017" name="Plant J.">
        <title>Araport11: a complete reannotation of the Arabidopsis thaliana reference genome.</title>
        <authorList>
            <person name="Cheng C.Y."/>
            <person name="Krishnakumar V."/>
            <person name="Chan A.P."/>
            <person name="Thibaud-Nissen F."/>
            <person name="Schobel S."/>
            <person name="Town C.D."/>
        </authorList>
    </citation>
    <scope>GENOME REANNOTATION</scope>
    <source>
        <strain>cv. Columbia</strain>
    </source>
</reference>
<reference key="3">
    <citation type="journal article" date="2003" name="Science">
        <title>Empirical analysis of transcriptional activity in the Arabidopsis genome.</title>
        <authorList>
            <person name="Yamada K."/>
            <person name="Lim J."/>
            <person name="Dale J.M."/>
            <person name="Chen H."/>
            <person name="Shinn P."/>
            <person name="Palm C.J."/>
            <person name="Southwick A.M."/>
            <person name="Wu H.C."/>
            <person name="Kim C.J."/>
            <person name="Nguyen M."/>
            <person name="Pham P.K."/>
            <person name="Cheuk R.F."/>
            <person name="Karlin-Newmann G."/>
            <person name="Liu S.X."/>
            <person name="Lam B."/>
            <person name="Sakano H."/>
            <person name="Wu T."/>
            <person name="Yu G."/>
            <person name="Miranda M."/>
            <person name="Quach H.L."/>
            <person name="Tripp M."/>
            <person name="Chang C.H."/>
            <person name="Lee J.M."/>
            <person name="Toriumi M.J."/>
            <person name="Chan M.M."/>
            <person name="Tang C.C."/>
            <person name="Onodera C.S."/>
            <person name="Deng J.M."/>
            <person name="Akiyama K."/>
            <person name="Ansari Y."/>
            <person name="Arakawa T."/>
            <person name="Banh J."/>
            <person name="Banno F."/>
            <person name="Bowser L."/>
            <person name="Brooks S.Y."/>
            <person name="Carninci P."/>
            <person name="Chao Q."/>
            <person name="Choy N."/>
            <person name="Enju A."/>
            <person name="Goldsmith A.D."/>
            <person name="Gurjal M."/>
            <person name="Hansen N.F."/>
            <person name="Hayashizaki Y."/>
            <person name="Johnson-Hopson C."/>
            <person name="Hsuan V.W."/>
            <person name="Iida K."/>
            <person name="Karnes M."/>
            <person name="Khan S."/>
            <person name="Koesema E."/>
            <person name="Ishida J."/>
            <person name="Jiang P.X."/>
            <person name="Jones T."/>
            <person name="Kawai J."/>
            <person name="Kamiya A."/>
            <person name="Meyers C."/>
            <person name="Nakajima M."/>
            <person name="Narusaka M."/>
            <person name="Seki M."/>
            <person name="Sakurai T."/>
            <person name="Satou M."/>
            <person name="Tamse R."/>
            <person name="Vaysberg M."/>
            <person name="Wallender E.K."/>
            <person name="Wong C."/>
            <person name="Yamamura Y."/>
            <person name="Yuan S."/>
            <person name="Shinozaki K."/>
            <person name="Davis R.W."/>
            <person name="Theologis A."/>
            <person name="Ecker J.R."/>
        </authorList>
    </citation>
    <scope>NUCLEOTIDE SEQUENCE [LARGE SCALE MRNA]</scope>
    <source>
        <strain>cv. Columbia</strain>
    </source>
</reference>
<reference key="4">
    <citation type="submission" date="2002-03" db="EMBL/GenBank/DDBJ databases">
        <title>Full-length cDNA from Arabidopsis thaliana.</title>
        <authorList>
            <person name="Brover V.V."/>
            <person name="Troukhan M.E."/>
            <person name="Alexandrov N.A."/>
            <person name="Lu Y.-P."/>
            <person name="Flavell R.B."/>
            <person name="Feldmann K.A."/>
        </authorList>
    </citation>
    <scope>NUCLEOTIDE SEQUENCE [LARGE SCALE MRNA]</scope>
</reference>
<reference key="5">
    <citation type="journal article" date="2008" name="J. Proteome Res.">
        <title>Site-specific phosphorylation profiling of Arabidopsis proteins by mass spectrometry and peptide chip analysis.</title>
        <authorList>
            <person name="de la Fuente van Bentem S."/>
            <person name="Anrather D."/>
            <person name="Dohnal I."/>
            <person name="Roitinger E."/>
            <person name="Csaszar E."/>
            <person name="Joore J."/>
            <person name="Buijnink J."/>
            <person name="Carreri A."/>
            <person name="Forzani C."/>
            <person name="Lorkovic Z.J."/>
            <person name="Barta A."/>
            <person name="Lecourieux D."/>
            <person name="Verhounig A."/>
            <person name="Jonak C."/>
            <person name="Hirt H."/>
        </authorList>
    </citation>
    <scope>PHOSPHORYLATION [LARGE SCALE ANALYSIS] AT SER-28</scope>
    <scope>IDENTIFICATION BY MASS SPECTROMETRY [LARGE SCALE ANALYSIS]</scope>
    <source>
        <tissue>Root</tissue>
    </source>
</reference>
<reference key="6">
    <citation type="journal article" date="2009" name="BMC Plant Biol.">
        <title>Characterization of two Arabidopsis thaliana acyltransferases with preference for lysophosphatidylethanolamine.</title>
        <authorList>
            <person name="Staalberg K."/>
            <person name="Staahl U."/>
            <person name="Stymne S."/>
            <person name="Ohlrogge J."/>
        </authorList>
    </citation>
    <scope>FUNCTION</scope>
    <scope>CATALYTIC ACTIVITY</scope>
    <scope>BIOPHYSICOCHEMICAL PROPERTIES</scope>
    <scope>SUBSTRATE SPECIFICITY</scope>
</reference>
<reference key="7">
    <citation type="journal article" date="2009" name="J. Proteomics">
        <title>Phosphoproteomic analysis of nuclei-enriched fractions from Arabidopsis thaliana.</title>
        <authorList>
            <person name="Jones A.M.E."/>
            <person name="MacLean D."/>
            <person name="Studholme D.J."/>
            <person name="Serna-Sanz A."/>
            <person name="Andreasson E."/>
            <person name="Rathjen J.P."/>
            <person name="Peck S.C."/>
        </authorList>
    </citation>
    <scope>IDENTIFICATION BY MASS SPECTROMETRY [LARGE SCALE ANALYSIS]</scope>
    <source>
        <strain>cv. Columbia</strain>
    </source>
</reference>
<reference key="8">
    <citation type="journal article" date="2009" name="Plant Physiol.">
        <title>Large-scale Arabidopsis phosphoproteome profiling reveals novel chloroplast kinase substrates and phosphorylation networks.</title>
        <authorList>
            <person name="Reiland S."/>
            <person name="Messerli G."/>
            <person name="Baerenfaller K."/>
            <person name="Gerrits B."/>
            <person name="Endler A."/>
            <person name="Grossmann J."/>
            <person name="Gruissem W."/>
            <person name="Baginsky S."/>
        </authorList>
    </citation>
    <scope>IDENTIFICATION BY MASS SPECTROMETRY [LARGE SCALE ANALYSIS]</scope>
</reference>
<reference key="9">
    <citation type="journal article" date="2012" name="Plant Physiol.">
        <title>Putative glycosyltransferases and other plant Golgi apparatus proteins are revealed by LOPIT proteomics.</title>
        <authorList>
            <person name="Nikolovski N."/>
            <person name="Rubtsov D."/>
            <person name="Segura M.P."/>
            <person name="Miles G.P."/>
            <person name="Stevens T.J."/>
            <person name="Dunkley T.P."/>
            <person name="Munro S."/>
            <person name="Lilley K.S."/>
            <person name="Dupree P."/>
        </authorList>
    </citation>
    <scope>SUBCELLULAR LOCATION</scope>
</reference>
<reference key="10">
    <citation type="journal article" date="2017" name="Plant Physiol.">
        <title>Acyl-CoA:lysophosphatidylethanolamine acyltransferase activity regulates growth of Arabidopsis.</title>
        <authorList>
            <person name="Jasieniecka-Gazarkiewicz K."/>
            <person name="Lager I."/>
            <person name="Carlsson A.S."/>
            <person name="Gutbrod K."/>
            <person name="Peisker H."/>
            <person name="Doermann P."/>
            <person name="Stymne S."/>
            <person name="Banas A."/>
        </authorList>
    </citation>
    <scope>FUNCTION</scope>
    <scope>CATALYTIC ACTIVITY</scope>
    <scope>DISRUPTION PHENOTYPE</scope>
</reference>
<reference key="11">
    <citation type="journal article" date="2021" name="Int. J. Mol. Sci.">
        <title>Subcellular localization of acyl-CoA: lysophosphatidylethanolamine acyltransferases (LPEATs) and the effects of knocking-out and overexpression of their genes on autophagy markers level and life span of A. thaliana.</title>
        <authorList>
            <person name="Jasieniecka-Gazarkiewicz K."/>
            <person name="Demski K."/>
            <person name="Gidda S.K."/>
            <person name="Klinska S."/>
            <person name="Niedojadlo J."/>
            <person name="Lager I."/>
            <person name="Carlsson A.S."/>
            <person name="Minina E.A."/>
            <person name="Mullen R.T."/>
            <person name="Bozhkov P.V."/>
            <person name="Stymne S."/>
            <person name="Banas A."/>
        </authorList>
    </citation>
    <scope>SUBCELLULAR LOCATION</scope>
    <scope>DISRUPTION PHENOTYPE</scope>
</reference>
<dbReference type="EC" id="2.3.1.23" evidence="4 5"/>
<dbReference type="EC" id="2.3.1.51" evidence="4"/>
<dbReference type="EC" id="2.3.1.n6" evidence="4"/>
<dbReference type="EC" id="2.3.1.n7" evidence="4 5"/>
<dbReference type="EMBL" id="AC011713">
    <property type="protein sequence ID" value="AAF14683.1"/>
    <property type="status" value="ALT_SEQ"/>
    <property type="molecule type" value="Genomic_DNA"/>
</dbReference>
<dbReference type="EMBL" id="CP002684">
    <property type="protein sequence ID" value="AEE36471.1"/>
    <property type="molecule type" value="Genomic_DNA"/>
</dbReference>
<dbReference type="EMBL" id="AY128312">
    <property type="protein sequence ID" value="AAM91515.1"/>
    <property type="molecule type" value="mRNA"/>
</dbReference>
<dbReference type="EMBL" id="BT003346">
    <property type="protein sequence ID" value="AAO29964.1"/>
    <property type="molecule type" value="mRNA"/>
</dbReference>
<dbReference type="EMBL" id="AY084489">
    <property type="protein sequence ID" value="AAM61059.1"/>
    <property type="molecule type" value="mRNA"/>
</dbReference>
<dbReference type="PIR" id="E96842">
    <property type="entry name" value="E96842"/>
</dbReference>
<dbReference type="RefSeq" id="NP_565249.1">
    <property type="nucleotide sequence ID" value="NM_106743.3"/>
</dbReference>
<dbReference type="FunCoup" id="Q8L7R3">
    <property type="interactions" value="513"/>
</dbReference>
<dbReference type="STRING" id="3702.Q8L7R3"/>
<dbReference type="iPTMnet" id="Q8L7R3"/>
<dbReference type="PaxDb" id="3702-AT1G80950.1"/>
<dbReference type="ProteomicsDB" id="238774"/>
<dbReference type="EnsemblPlants" id="AT1G80950.1">
    <property type="protein sequence ID" value="AT1G80950.1"/>
    <property type="gene ID" value="AT1G80950"/>
</dbReference>
<dbReference type="GeneID" id="844435"/>
<dbReference type="Gramene" id="AT1G80950.1">
    <property type="protein sequence ID" value="AT1G80950.1"/>
    <property type="gene ID" value="AT1G80950"/>
</dbReference>
<dbReference type="KEGG" id="ath:AT1G80950"/>
<dbReference type="Araport" id="AT1G80950"/>
<dbReference type="TAIR" id="AT1G80950">
    <property type="gene designation" value="LPEAT1"/>
</dbReference>
<dbReference type="eggNOG" id="KOG4666">
    <property type="taxonomic scope" value="Eukaryota"/>
</dbReference>
<dbReference type="HOGENOM" id="CLU_042218_0_0_1"/>
<dbReference type="InParanoid" id="Q8L7R3"/>
<dbReference type="PhylomeDB" id="Q8L7R3"/>
<dbReference type="BioCyc" id="ARA:AT1G80950-MONOMER"/>
<dbReference type="UniPathway" id="UPA00085"/>
<dbReference type="PRO" id="PR:Q8L7R3"/>
<dbReference type="Proteomes" id="UP000006548">
    <property type="component" value="Chromosome 1"/>
</dbReference>
<dbReference type="ExpressionAtlas" id="Q8L7R3">
    <property type="expression patterns" value="baseline and differential"/>
</dbReference>
<dbReference type="GO" id="GO:0005783">
    <property type="term" value="C:endoplasmic reticulum"/>
    <property type="evidence" value="ECO:0007005"/>
    <property type="project" value="TAIR"/>
</dbReference>
<dbReference type="GO" id="GO:0005789">
    <property type="term" value="C:endoplasmic reticulum membrane"/>
    <property type="evidence" value="ECO:0007669"/>
    <property type="project" value="UniProtKB-SubCell"/>
</dbReference>
<dbReference type="GO" id="GO:0003841">
    <property type="term" value="F:1-acylglycerol-3-phosphate O-acyltransferase activity"/>
    <property type="evidence" value="ECO:0007669"/>
    <property type="project" value="RHEA"/>
</dbReference>
<dbReference type="GO" id="GO:0047184">
    <property type="term" value="F:1-acylglycerophosphocholine O-acyltransferase activity"/>
    <property type="evidence" value="ECO:0007669"/>
    <property type="project" value="RHEA"/>
</dbReference>
<dbReference type="GO" id="GO:0106262">
    <property type="term" value="F:1-acylglycerophosphoethanolamine O-acyltransferase activity"/>
    <property type="evidence" value="ECO:0007669"/>
    <property type="project" value="RHEA"/>
</dbReference>
<dbReference type="GO" id="GO:0106263">
    <property type="term" value="F:1-acylglycerophosphoserine O-acyltransferase activity"/>
    <property type="evidence" value="ECO:0007669"/>
    <property type="project" value="RHEA"/>
</dbReference>
<dbReference type="GO" id="GO:0042171">
    <property type="term" value="F:lysophosphatidic acid acyltransferase activity"/>
    <property type="evidence" value="ECO:0000314"/>
    <property type="project" value="UniProtKB"/>
</dbReference>
<dbReference type="GO" id="GO:0071618">
    <property type="term" value="F:lysophosphatidylethanolamine acyltransferase activity"/>
    <property type="evidence" value="ECO:0000314"/>
    <property type="project" value="UniProtKB"/>
</dbReference>
<dbReference type="GO" id="GO:0071617">
    <property type="term" value="F:lysophospholipid acyltransferase activity"/>
    <property type="evidence" value="ECO:0000314"/>
    <property type="project" value="UniProtKB"/>
</dbReference>
<dbReference type="GO" id="GO:0047159">
    <property type="term" value="F:plasmalogen synthase activity"/>
    <property type="evidence" value="ECO:0007669"/>
    <property type="project" value="UniProtKB-EC"/>
</dbReference>
<dbReference type="GO" id="GO:0008654">
    <property type="term" value="P:phospholipid biosynthetic process"/>
    <property type="evidence" value="ECO:0007669"/>
    <property type="project" value="UniProtKB-KW"/>
</dbReference>
<dbReference type="GO" id="GO:0006644">
    <property type="term" value="P:phospholipid metabolic process"/>
    <property type="evidence" value="ECO:0000314"/>
    <property type="project" value="UniProtKB"/>
</dbReference>
<dbReference type="GO" id="GO:0000038">
    <property type="term" value="P:very long-chain fatty acid metabolic process"/>
    <property type="evidence" value="ECO:0000314"/>
    <property type="project" value="TAIR"/>
</dbReference>
<dbReference type="CDD" id="cd07991">
    <property type="entry name" value="LPLAT_LPCAT1-like"/>
    <property type="match status" value="1"/>
</dbReference>
<dbReference type="InterPro" id="IPR045252">
    <property type="entry name" value="LPCAT1-like"/>
</dbReference>
<dbReference type="InterPro" id="IPR002123">
    <property type="entry name" value="Plipid/glycerol_acylTrfase"/>
</dbReference>
<dbReference type="PANTHER" id="PTHR23063:SF54">
    <property type="entry name" value="LYSOPHOSPHOLIPID ACYLTRANSFERASE LPEAT1"/>
    <property type="match status" value="1"/>
</dbReference>
<dbReference type="PANTHER" id="PTHR23063">
    <property type="entry name" value="PHOSPHOLIPID ACYLTRANSFERASE"/>
    <property type="match status" value="1"/>
</dbReference>
<dbReference type="Pfam" id="PF01553">
    <property type="entry name" value="Acyltransferase"/>
    <property type="match status" value="1"/>
</dbReference>
<dbReference type="SMART" id="SM00563">
    <property type="entry name" value="PlsC"/>
    <property type="match status" value="1"/>
</dbReference>
<dbReference type="SUPFAM" id="SSF69593">
    <property type="entry name" value="Glycerol-3-phosphate (1)-acyltransferase"/>
    <property type="match status" value="1"/>
</dbReference>
<name>LPCT1_ARATH</name>
<organism>
    <name type="scientific">Arabidopsis thaliana</name>
    <name type="common">Mouse-ear cress</name>
    <dbReference type="NCBI Taxonomy" id="3702"/>
    <lineage>
        <taxon>Eukaryota</taxon>
        <taxon>Viridiplantae</taxon>
        <taxon>Streptophyta</taxon>
        <taxon>Embryophyta</taxon>
        <taxon>Tracheophyta</taxon>
        <taxon>Spermatophyta</taxon>
        <taxon>Magnoliopsida</taxon>
        <taxon>eudicotyledons</taxon>
        <taxon>Gunneridae</taxon>
        <taxon>Pentapetalae</taxon>
        <taxon>rosids</taxon>
        <taxon>malvids</taxon>
        <taxon>Brassicales</taxon>
        <taxon>Brassicaceae</taxon>
        <taxon>Camelineae</taxon>
        <taxon>Arabidopsis</taxon>
    </lineage>
</organism>
<feature type="chain" id="PRO_0000422378" description="Lysophospholipid acyltransferase LPEAT1">
    <location>
        <begin position="1"/>
        <end position="398"/>
    </location>
</feature>
<feature type="transmembrane region" description="Helical" evidence="2">
    <location>
        <begin position="66"/>
        <end position="86"/>
    </location>
</feature>
<feature type="region of interest" description="Disordered" evidence="3">
    <location>
        <begin position="1"/>
        <end position="24"/>
    </location>
</feature>
<feature type="region of interest" description="Disordered" evidence="3">
    <location>
        <begin position="158"/>
        <end position="185"/>
    </location>
</feature>
<feature type="short sequence motif" description="HXXXXD motif" evidence="1">
    <location>
        <begin position="194"/>
        <end position="199"/>
    </location>
</feature>
<feature type="compositionally biased region" description="Polar residues" evidence="3">
    <location>
        <begin position="163"/>
        <end position="174"/>
    </location>
</feature>
<feature type="modified residue" description="Phosphoserine" evidence="12">
    <location>
        <position position="28"/>
    </location>
</feature>
<feature type="sequence conflict" description="In Ref. 4; AAM61059." evidence="8" ref="4">
    <original>V</original>
    <variation>F</variation>
    <location>
        <position position="327"/>
    </location>
</feature>
<comment type="function">
    <text evidence="4 5">Possesses acyl-CoA-dependent lysophospholipid acyltransferase activity with a subset of lysophospholipids as substrates (PubMed:19445718, PubMed:28408542). Exhibits strong acylation activity on lysophosphatidylethanolamine (LPE) and lysophosphatidate (LPA), and lower activity on lysophosphatidylcholine (LPC) and lysophosphatidylserine (LPS) (PubMed:19445718). Exhibits acylation activity on both LPE and LPC (PubMed:28408542). Has a preference for 18:1-LPE over 16:0-LPE as acceptor (PubMed:19445718). Palmitoyl-CoA (16:0-CoA) is a better acyl donor than oleoyl-CoA (18:1-CoA) (PubMed:19445718, PubMed:28408542). Among several different acyl-CoA species the best acyl donor is palmitoyl-CoA (16:0-CoA) (PubMed:28408542). Activity is calcium-independent (PubMed:19445718). Its activity is essential for maintaining adequate levels of phosphatidylethanolamine (PE), LPE and LPC in the cells, which is crucial for plant growth regulation (PubMed:28408542).</text>
</comment>
<comment type="catalytic activity">
    <reaction evidence="4 5">
        <text>a 1-acyl-sn-glycero-3-phosphoethanolamine + an acyl-CoA = a 1,2-diacyl-sn-glycero-3-phosphoethanolamine + CoA</text>
        <dbReference type="Rhea" id="RHEA:32995"/>
        <dbReference type="ChEBI" id="CHEBI:57287"/>
        <dbReference type="ChEBI" id="CHEBI:58342"/>
        <dbReference type="ChEBI" id="CHEBI:64381"/>
        <dbReference type="ChEBI" id="CHEBI:64612"/>
        <dbReference type="EC" id="2.3.1.n7"/>
    </reaction>
    <physiologicalReaction direction="left-to-right" evidence="4 5">
        <dbReference type="Rhea" id="RHEA:32996"/>
    </physiologicalReaction>
</comment>
<comment type="catalytic activity">
    <reaction evidence="4">
        <text>a 1-acyl-sn-glycero-3-phosphate + an acyl-CoA = a 1,2-diacyl-sn-glycero-3-phosphate + CoA</text>
        <dbReference type="Rhea" id="RHEA:19709"/>
        <dbReference type="ChEBI" id="CHEBI:57287"/>
        <dbReference type="ChEBI" id="CHEBI:57970"/>
        <dbReference type="ChEBI" id="CHEBI:58342"/>
        <dbReference type="ChEBI" id="CHEBI:58608"/>
        <dbReference type="EC" id="2.3.1.51"/>
    </reaction>
    <physiologicalReaction direction="left-to-right" evidence="4">
        <dbReference type="Rhea" id="RHEA:19710"/>
    </physiologicalReaction>
</comment>
<comment type="catalytic activity">
    <reaction evidence="4 5">
        <text>a 1-acyl-sn-glycero-3-phosphocholine + an acyl-CoA = a 1,2-diacyl-sn-glycero-3-phosphocholine + CoA</text>
        <dbReference type="Rhea" id="RHEA:12937"/>
        <dbReference type="ChEBI" id="CHEBI:57287"/>
        <dbReference type="ChEBI" id="CHEBI:57643"/>
        <dbReference type="ChEBI" id="CHEBI:58168"/>
        <dbReference type="ChEBI" id="CHEBI:58342"/>
        <dbReference type="EC" id="2.3.1.23"/>
    </reaction>
    <physiologicalReaction direction="left-to-right" evidence="4 5">
        <dbReference type="Rhea" id="RHEA:12938"/>
    </physiologicalReaction>
</comment>
<comment type="catalytic activity">
    <reaction evidence="4">
        <text>a 1-acyl-sn-glycero-3-phospho-L-serine + an acyl-CoA = a 1,2-diacyl-sn-glycero-3-phospho-L-serine + CoA</text>
        <dbReference type="Rhea" id="RHEA:33191"/>
        <dbReference type="ChEBI" id="CHEBI:57262"/>
        <dbReference type="ChEBI" id="CHEBI:57287"/>
        <dbReference type="ChEBI" id="CHEBI:58342"/>
        <dbReference type="ChEBI" id="CHEBI:64379"/>
        <dbReference type="EC" id="2.3.1.n6"/>
    </reaction>
    <physiologicalReaction direction="left-to-right" evidence="4">
        <dbReference type="Rhea" id="RHEA:33192"/>
    </physiologicalReaction>
</comment>
<comment type="biophysicochemical properties">
    <phDependence>
        <text evidence="4">Optimum pH is 6.0-9.0.</text>
    </phDependence>
</comment>
<comment type="pathway">
    <text evidence="8">Lipid metabolism; phospholipid metabolism.</text>
</comment>
<comment type="subcellular location">
    <subcellularLocation>
        <location evidence="6 9">Endoplasmic reticulum membrane</location>
        <topology evidence="2">Single-pass membrane protein</topology>
    </subcellularLocation>
</comment>
<comment type="domain">
    <text evidence="1">The HXXXXD motif is essential for acyltransferase activity and may constitute the binding site for the phosphate moiety of the glycerol-3-phosphocholine.</text>
</comment>
<comment type="disruption phenotype">
    <text evidence="5 6">Delayed senescence (PubMed:33809440). The double mutants lpeat1 and lpeat2 exhibit impaired growth, small leaves, short roots, reduced seed setting, reduced lipid content per fresh weight in roots and seeds, and large increases in lysophosphatidylethanolamine (LPE) and lysophosphatidylcholine (LPC) contents in leaves.</text>
</comment>
<comment type="similarity">
    <text evidence="8">Belongs to the 1-acyl-sn-glycerol-3-phosphate acyltransferase family.</text>
</comment>
<comment type="sequence caution" evidence="8">
    <conflict type="erroneous gene model prediction">
        <sequence resource="EMBL-CDS" id="AAF14683"/>
    </conflict>
</comment>
<accession>Q8L7R3</accession>
<accession>Q8LG31</accession>
<accession>Q9SAG5</accession>
<gene>
    <name evidence="7" type="primary">LPEAT1</name>
    <name evidence="10" type="ordered locus">At1g80950</name>
    <name evidence="11" type="ORF">F23A5.31</name>
</gene>
<keyword id="KW-0012">Acyltransferase</keyword>
<keyword id="KW-0256">Endoplasmic reticulum</keyword>
<keyword id="KW-0444">Lipid biosynthesis</keyword>
<keyword id="KW-0443">Lipid metabolism</keyword>
<keyword id="KW-0472">Membrane</keyword>
<keyword id="KW-0594">Phospholipid biosynthesis</keyword>
<keyword id="KW-1208">Phospholipid metabolism</keyword>
<keyword id="KW-0597">Phosphoprotein</keyword>
<keyword id="KW-1185">Reference proteome</keyword>
<keyword id="KW-0808">Transferase</keyword>
<keyword id="KW-0812">Transmembrane</keyword>
<keyword id="KW-1133">Transmembrane helix</keyword>